<sequence length="259" mass="28161">MPATTGPQDVSGRAGGPASTERLHVAIIMDGNGRWAKQRGMPRVLGHRAGVNALKRTVEGAQSQNVGVLTVFGFSTENWSRPPQEVSELMGLLKAYVESDLERLAKAGVRVRIIGRRTGLSPDIAEVIERAERRTAQNSEFVLQVAFNYGGQADITDAARAFAERVERGEAKASDLNEKTFEQFLSTASAPPPDLIVRTSGERRISNFLLWDCAYAELVFQDVLWPDYGPEALAAAIAEYRGRDRRYGGVAADDVAVAG</sequence>
<organism>
    <name type="scientific">Caulobacter vibrioides (strain ATCC 19089 / CIP 103742 / CB 15)</name>
    <name type="common">Caulobacter crescentus</name>
    <dbReference type="NCBI Taxonomy" id="190650"/>
    <lineage>
        <taxon>Bacteria</taxon>
        <taxon>Pseudomonadati</taxon>
        <taxon>Pseudomonadota</taxon>
        <taxon>Alphaproteobacteria</taxon>
        <taxon>Caulobacterales</taxon>
        <taxon>Caulobacteraceae</taxon>
        <taxon>Caulobacter</taxon>
    </lineage>
</organism>
<proteinExistence type="inferred from homology"/>
<keyword id="KW-0460">Magnesium</keyword>
<keyword id="KW-0479">Metal-binding</keyword>
<keyword id="KW-1185">Reference proteome</keyword>
<keyword id="KW-0808">Transferase</keyword>
<feature type="chain" id="PRO_0000123590" description="Isoprenyl transferase">
    <location>
        <begin position="1"/>
        <end position="259"/>
    </location>
</feature>
<feature type="active site" evidence="1">
    <location>
        <position position="30"/>
    </location>
</feature>
<feature type="active site" description="Proton acceptor" evidence="1">
    <location>
        <position position="78"/>
    </location>
</feature>
<feature type="binding site" evidence="1">
    <location>
        <position position="30"/>
    </location>
    <ligand>
        <name>Mg(2+)</name>
        <dbReference type="ChEBI" id="CHEBI:18420"/>
    </ligand>
</feature>
<feature type="binding site" evidence="1">
    <location>
        <begin position="31"/>
        <end position="34"/>
    </location>
    <ligand>
        <name>substrate</name>
    </ligand>
</feature>
<feature type="binding site" evidence="1">
    <location>
        <position position="35"/>
    </location>
    <ligand>
        <name>substrate</name>
    </ligand>
</feature>
<feature type="binding site" evidence="1">
    <location>
        <position position="43"/>
    </location>
    <ligand>
        <name>substrate</name>
    </ligand>
</feature>
<feature type="binding site" evidence="1">
    <location>
        <position position="47"/>
    </location>
    <ligand>
        <name>substrate</name>
    </ligand>
</feature>
<feature type="binding site" evidence="1">
    <location>
        <begin position="75"/>
        <end position="77"/>
    </location>
    <ligand>
        <name>substrate</name>
    </ligand>
</feature>
<feature type="binding site" evidence="1">
    <location>
        <position position="79"/>
    </location>
    <ligand>
        <name>substrate</name>
    </ligand>
</feature>
<feature type="binding site" evidence="1">
    <location>
        <position position="81"/>
    </location>
    <ligand>
        <name>substrate</name>
    </ligand>
</feature>
<feature type="binding site" evidence="1">
    <location>
        <position position="198"/>
    </location>
    <ligand>
        <name>substrate</name>
    </ligand>
</feature>
<feature type="binding site" evidence="1">
    <location>
        <begin position="204"/>
        <end position="206"/>
    </location>
    <ligand>
        <name>substrate</name>
    </ligand>
</feature>
<feature type="binding site" evidence="1">
    <location>
        <position position="217"/>
    </location>
    <ligand>
        <name>Mg(2+)</name>
        <dbReference type="ChEBI" id="CHEBI:18420"/>
    </ligand>
</feature>
<accession>Q9A707</accession>
<name>ISPT_CAUVC</name>
<protein>
    <recommendedName>
        <fullName evidence="1">Isoprenyl transferase</fullName>
        <ecNumber evidence="1">2.5.1.-</ecNumber>
    </recommendedName>
</protein>
<evidence type="ECO:0000255" key="1">
    <source>
        <dbReference type="HAMAP-Rule" id="MF_01139"/>
    </source>
</evidence>
<reference key="1">
    <citation type="journal article" date="2001" name="Proc. Natl. Acad. Sci. U.S.A.">
        <title>Complete genome sequence of Caulobacter crescentus.</title>
        <authorList>
            <person name="Nierman W.C."/>
            <person name="Feldblyum T.V."/>
            <person name="Laub M.T."/>
            <person name="Paulsen I.T."/>
            <person name="Nelson K.E."/>
            <person name="Eisen J.A."/>
            <person name="Heidelberg J.F."/>
            <person name="Alley M.R.K."/>
            <person name="Ohta N."/>
            <person name="Maddock J.R."/>
            <person name="Potocka I."/>
            <person name="Nelson W.C."/>
            <person name="Newton A."/>
            <person name="Stephens C."/>
            <person name="Phadke N.D."/>
            <person name="Ely B."/>
            <person name="DeBoy R.T."/>
            <person name="Dodson R.J."/>
            <person name="Durkin A.S."/>
            <person name="Gwinn M.L."/>
            <person name="Haft D.H."/>
            <person name="Kolonay J.F."/>
            <person name="Smit J."/>
            <person name="Craven M.B."/>
            <person name="Khouri H.M."/>
            <person name="Shetty J."/>
            <person name="Berry K.J."/>
            <person name="Utterback T.R."/>
            <person name="Tran K."/>
            <person name="Wolf A.M."/>
            <person name="Vamathevan J.J."/>
            <person name="Ermolaeva M.D."/>
            <person name="White O."/>
            <person name="Salzberg S.L."/>
            <person name="Venter J.C."/>
            <person name="Shapiro L."/>
            <person name="Fraser C.M."/>
        </authorList>
    </citation>
    <scope>NUCLEOTIDE SEQUENCE [LARGE SCALE GENOMIC DNA]</scope>
    <source>
        <strain>ATCC 19089 / CIP 103742 / CB 15</strain>
    </source>
</reference>
<gene>
    <name evidence="1" type="primary">uppS</name>
    <name type="ordered locus">CC_1919</name>
</gene>
<dbReference type="EC" id="2.5.1.-" evidence="1"/>
<dbReference type="EMBL" id="AE005673">
    <property type="protein sequence ID" value="AAK23894.1"/>
    <property type="molecule type" value="Genomic_DNA"/>
</dbReference>
<dbReference type="PIR" id="B87487">
    <property type="entry name" value="B87487"/>
</dbReference>
<dbReference type="RefSeq" id="NP_420726.1">
    <property type="nucleotide sequence ID" value="NC_002696.2"/>
</dbReference>
<dbReference type="RefSeq" id="WP_010919785.1">
    <property type="nucleotide sequence ID" value="NC_002696.2"/>
</dbReference>
<dbReference type="SMR" id="Q9A707"/>
<dbReference type="STRING" id="190650.CC_1919"/>
<dbReference type="EnsemblBacteria" id="AAK23894">
    <property type="protein sequence ID" value="AAK23894"/>
    <property type="gene ID" value="CC_1919"/>
</dbReference>
<dbReference type="KEGG" id="ccr:CC_1919"/>
<dbReference type="PATRIC" id="fig|190650.5.peg.1936"/>
<dbReference type="eggNOG" id="COG0020">
    <property type="taxonomic scope" value="Bacteria"/>
</dbReference>
<dbReference type="HOGENOM" id="CLU_038505_1_1_5"/>
<dbReference type="BioCyc" id="CAULO:CC1919-MONOMER"/>
<dbReference type="Proteomes" id="UP000001816">
    <property type="component" value="Chromosome"/>
</dbReference>
<dbReference type="GO" id="GO:0005829">
    <property type="term" value="C:cytosol"/>
    <property type="evidence" value="ECO:0007669"/>
    <property type="project" value="TreeGrafter"/>
</dbReference>
<dbReference type="GO" id="GO:0008834">
    <property type="term" value="F:ditrans,polycis-undecaprenyl-diphosphate synthase [(2E,6E)-farnesyl-diphosphate specific] activity"/>
    <property type="evidence" value="ECO:0007669"/>
    <property type="project" value="TreeGrafter"/>
</dbReference>
<dbReference type="GO" id="GO:0000287">
    <property type="term" value="F:magnesium ion binding"/>
    <property type="evidence" value="ECO:0007669"/>
    <property type="project" value="UniProtKB-UniRule"/>
</dbReference>
<dbReference type="GO" id="GO:0016094">
    <property type="term" value="P:polyprenol biosynthetic process"/>
    <property type="evidence" value="ECO:0007669"/>
    <property type="project" value="TreeGrafter"/>
</dbReference>
<dbReference type="CDD" id="cd00475">
    <property type="entry name" value="Cis_IPPS"/>
    <property type="match status" value="1"/>
</dbReference>
<dbReference type="FunFam" id="3.40.1180.10:FF:000001">
    <property type="entry name" value="(2E,6E)-farnesyl-diphosphate-specific ditrans,polycis-undecaprenyl-diphosphate synthase"/>
    <property type="match status" value="1"/>
</dbReference>
<dbReference type="Gene3D" id="3.40.1180.10">
    <property type="entry name" value="Decaprenyl diphosphate synthase-like"/>
    <property type="match status" value="1"/>
</dbReference>
<dbReference type="HAMAP" id="MF_01139">
    <property type="entry name" value="ISPT"/>
    <property type="match status" value="1"/>
</dbReference>
<dbReference type="InterPro" id="IPR001441">
    <property type="entry name" value="UPP_synth-like"/>
</dbReference>
<dbReference type="InterPro" id="IPR018520">
    <property type="entry name" value="UPP_synth-like_CS"/>
</dbReference>
<dbReference type="InterPro" id="IPR036424">
    <property type="entry name" value="UPP_synth-like_sf"/>
</dbReference>
<dbReference type="NCBIfam" id="TIGR00055">
    <property type="entry name" value="uppS"/>
    <property type="match status" value="1"/>
</dbReference>
<dbReference type="PANTHER" id="PTHR10291:SF0">
    <property type="entry name" value="DEHYDRODOLICHYL DIPHOSPHATE SYNTHASE 2"/>
    <property type="match status" value="1"/>
</dbReference>
<dbReference type="PANTHER" id="PTHR10291">
    <property type="entry name" value="DEHYDRODOLICHYL DIPHOSPHATE SYNTHASE FAMILY MEMBER"/>
    <property type="match status" value="1"/>
</dbReference>
<dbReference type="Pfam" id="PF01255">
    <property type="entry name" value="Prenyltransf"/>
    <property type="match status" value="1"/>
</dbReference>
<dbReference type="SUPFAM" id="SSF64005">
    <property type="entry name" value="Undecaprenyl diphosphate synthase"/>
    <property type="match status" value="1"/>
</dbReference>
<dbReference type="PROSITE" id="PS01066">
    <property type="entry name" value="UPP_SYNTHASE"/>
    <property type="match status" value="1"/>
</dbReference>
<comment type="function">
    <text evidence="1">Catalyzes the condensation of isopentenyl diphosphate (IPP) with allylic pyrophosphates generating different type of terpenoids.</text>
</comment>
<comment type="cofactor">
    <cofactor evidence="1">
        <name>Mg(2+)</name>
        <dbReference type="ChEBI" id="CHEBI:18420"/>
    </cofactor>
    <text evidence="1">Binds 2 magnesium ions per subunit.</text>
</comment>
<comment type="subunit">
    <text evidence="1">Homodimer.</text>
</comment>
<comment type="similarity">
    <text evidence="1">Belongs to the UPP synthase family.</text>
</comment>